<evidence type="ECO:0000255" key="1">
    <source>
        <dbReference type="HAMAP-Rule" id="MF_00815"/>
    </source>
</evidence>
<keyword id="KW-0066">ATP synthesis</keyword>
<keyword id="KW-0997">Cell inner membrane</keyword>
<keyword id="KW-1003">Cell membrane</keyword>
<keyword id="KW-0139">CF(1)</keyword>
<keyword id="KW-0375">Hydrogen ion transport</keyword>
<keyword id="KW-0406">Ion transport</keyword>
<keyword id="KW-0472">Membrane</keyword>
<keyword id="KW-1185">Reference proteome</keyword>
<keyword id="KW-0813">Transport</keyword>
<dbReference type="EMBL" id="CP000830">
    <property type="protein sequence ID" value="ABV94668.1"/>
    <property type="molecule type" value="Genomic_DNA"/>
</dbReference>
<dbReference type="RefSeq" id="WP_012179596.1">
    <property type="nucleotide sequence ID" value="NC_009952.1"/>
</dbReference>
<dbReference type="SMR" id="A8LJR5"/>
<dbReference type="STRING" id="398580.Dshi_2935"/>
<dbReference type="KEGG" id="dsh:Dshi_2935"/>
<dbReference type="eggNOG" id="COG0224">
    <property type="taxonomic scope" value="Bacteria"/>
</dbReference>
<dbReference type="HOGENOM" id="CLU_050669_0_1_5"/>
<dbReference type="OrthoDB" id="9812769at2"/>
<dbReference type="Proteomes" id="UP000006833">
    <property type="component" value="Chromosome"/>
</dbReference>
<dbReference type="GO" id="GO:0005886">
    <property type="term" value="C:plasma membrane"/>
    <property type="evidence" value="ECO:0007669"/>
    <property type="project" value="UniProtKB-SubCell"/>
</dbReference>
<dbReference type="GO" id="GO:0045259">
    <property type="term" value="C:proton-transporting ATP synthase complex"/>
    <property type="evidence" value="ECO:0007669"/>
    <property type="project" value="UniProtKB-KW"/>
</dbReference>
<dbReference type="GO" id="GO:0005524">
    <property type="term" value="F:ATP binding"/>
    <property type="evidence" value="ECO:0007669"/>
    <property type="project" value="UniProtKB-UniRule"/>
</dbReference>
<dbReference type="GO" id="GO:0046933">
    <property type="term" value="F:proton-transporting ATP synthase activity, rotational mechanism"/>
    <property type="evidence" value="ECO:0007669"/>
    <property type="project" value="UniProtKB-UniRule"/>
</dbReference>
<dbReference type="GO" id="GO:0042777">
    <property type="term" value="P:proton motive force-driven plasma membrane ATP synthesis"/>
    <property type="evidence" value="ECO:0007669"/>
    <property type="project" value="UniProtKB-UniRule"/>
</dbReference>
<dbReference type="CDD" id="cd12151">
    <property type="entry name" value="F1-ATPase_gamma"/>
    <property type="match status" value="1"/>
</dbReference>
<dbReference type="FunFam" id="1.10.287.80:FF:000001">
    <property type="entry name" value="ATP synthase gamma chain"/>
    <property type="match status" value="1"/>
</dbReference>
<dbReference type="FunFam" id="1.10.287.80:FF:000003">
    <property type="entry name" value="ATP synthase gamma chain, chloroplastic"/>
    <property type="match status" value="1"/>
</dbReference>
<dbReference type="Gene3D" id="3.40.1380.10">
    <property type="match status" value="1"/>
</dbReference>
<dbReference type="Gene3D" id="1.10.287.80">
    <property type="entry name" value="ATP synthase, gamma subunit, helix hairpin domain"/>
    <property type="match status" value="1"/>
</dbReference>
<dbReference type="HAMAP" id="MF_00815">
    <property type="entry name" value="ATP_synth_gamma_bact"/>
    <property type="match status" value="1"/>
</dbReference>
<dbReference type="InterPro" id="IPR035968">
    <property type="entry name" value="ATP_synth_F1_ATPase_gsu"/>
</dbReference>
<dbReference type="InterPro" id="IPR000131">
    <property type="entry name" value="ATP_synth_F1_gsu"/>
</dbReference>
<dbReference type="InterPro" id="IPR023632">
    <property type="entry name" value="ATP_synth_F1_gsu_CS"/>
</dbReference>
<dbReference type="NCBIfam" id="TIGR01146">
    <property type="entry name" value="ATPsyn_F1gamma"/>
    <property type="match status" value="1"/>
</dbReference>
<dbReference type="NCBIfam" id="NF004146">
    <property type="entry name" value="PRK05621.1-4"/>
    <property type="match status" value="1"/>
</dbReference>
<dbReference type="PANTHER" id="PTHR11693">
    <property type="entry name" value="ATP SYNTHASE GAMMA CHAIN"/>
    <property type="match status" value="1"/>
</dbReference>
<dbReference type="PANTHER" id="PTHR11693:SF22">
    <property type="entry name" value="ATP SYNTHASE SUBUNIT GAMMA, MITOCHONDRIAL"/>
    <property type="match status" value="1"/>
</dbReference>
<dbReference type="Pfam" id="PF00231">
    <property type="entry name" value="ATP-synt"/>
    <property type="match status" value="1"/>
</dbReference>
<dbReference type="PIRSF" id="PIRSF039089">
    <property type="entry name" value="ATP_synthase_gamma"/>
    <property type="match status" value="1"/>
</dbReference>
<dbReference type="PRINTS" id="PR00126">
    <property type="entry name" value="ATPASEGAMMA"/>
</dbReference>
<dbReference type="SUPFAM" id="SSF52943">
    <property type="entry name" value="ATP synthase (F1-ATPase), gamma subunit"/>
    <property type="match status" value="1"/>
</dbReference>
<dbReference type="PROSITE" id="PS00153">
    <property type="entry name" value="ATPASE_GAMMA"/>
    <property type="match status" value="1"/>
</dbReference>
<protein>
    <recommendedName>
        <fullName evidence="1">ATP synthase gamma chain</fullName>
    </recommendedName>
    <alternativeName>
        <fullName evidence="1">ATP synthase F1 sector gamma subunit</fullName>
    </alternativeName>
    <alternativeName>
        <fullName evidence="1">F-ATPase gamma subunit</fullName>
    </alternativeName>
</protein>
<sequence length="290" mass="31296">MPNLKDLKNRIESVKSTRKITKAMQMVAAAKLRRAQDAAEASRPYTERFNAVLAGLAASVGDSDSGPRLLVGTGSDQTHLLVVMTAERGLCGGFNSSIAKLARAHAEKLVAQGKTVKILTVGKKGREQLKRDLSKHFIGHVDLSEVKRVSYDNAADIAADVLGRFDAGEFDVATIFFNRFQSVISQIPTAQQIIPASFEGDADADATLYDYEPSEEAILADLLPRGVATQIFAALLENGASEQGARMSAMDNATRNAGDMIERLTIEYNRSRQAVITNELIEIISGAEAL</sequence>
<comment type="function">
    <text evidence="1">Produces ATP from ADP in the presence of a proton gradient across the membrane. The gamma chain is believed to be important in regulating ATPase activity and the flow of protons through the CF(0) complex.</text>
</comment>
<comment type="subunit">
    <text evidence="1">F-type ATPases have 2 components, CF(1) - the catalytic core - and CF(0) - the membrane proton channel. CF(1) has five subunits: alpha(3), beta(3), gamma(1), delta(1), epsilon(1). CF(0) has three main subunits: a, b and c.</text>
</comment>
<comment type="subcellular location">
    <subcellularLocation>
        <location evidence="1">Cell inner membrane</location>
        <topology evidence="1">Peripheral membrane protein</topology>
    </subcellularLocation>
</comment>
<comment type="similarity">
    <text evidence="1">Belongs to the ATPase gamma chain family.</text>
</comment>
<feature type="chain" id="PRO_1000083784" description="ATP synthase gamma chain">
    <location>
        <begin position="1"/>
        <end position="290"/>
    </location>
</feature>
<proteinExistence type="inferred from homology"/>
<organism>
    <name type="scientific">Dinoroseobacter shibae (strain DSM 16493 / NCIMB 14021 / DFL 12)</name>
    <dbReference type="NCBI Taxonomy" id="398580"/>
    <lineage>
        <taxon>Bacteria</taxon>
        <taxon>Pseudomonadati</taxon>
        <taxon>Pseudomonadota</taxon>
        <taxon>Alphaproteobacteria</taxon>
        <taxon>Rhodobacterales</taxon>
        <taxon>Roseobacteraceae</taxon>
        <taxon>Dinoroseobacter</taxon>
    </lineage>
</organism>
<reference key="1">
    <citation type="journal article" date="2010" name="ISME J.">
        <title>The complete genome sequence of the algal symbiont Dinoroseobacter shibae: a hitchhiker's guide to life in the sea.</title>
        <authorList>
            <person name="Wagner-Dobler I."/>
            <person name="Ballhausen B."/>
            <person name="Berger M."/>
            <person name="Brinkhoff T."/>
            <person name="Buchholz I."/>
            <person name="Bunk B."/>
            <person name="Cypionka H."/>
            <person name="Daniel R."/>
            <person name="Drepper T."/>
            <person name="Gerdts G."/>
            <person name="Hahnke S."/>
            <person name="Han C."/>
            <person name="Jahn D."/>
            <person name="Kalhoefer D."/>
            <person name="Kiss H."/>
            <person name="Klenk H.P."/>
            <person name="Kyrpides N."/>
            <person name="Liebl W."/>
            <person name="Liesegang H."/>
            <person name="Meincke L."/>
            <person name="Pati A."/>
            <person name="Petersen J."/>
            <person name="Piekarski T."/>
            <person name="Pommerenke C."/>
            <person name="Pradella S."/>
            <person name="Pukall R."/>
            <person name="Rabus R."/>
            <person name="Stackebrandt E."/>
            <person name="Thole S."/>
            <person name="Thompson L."/>
            <person name="Tielen P."/>
            <person name="Tomasch J."/>
            <person name="von Jan M."/>
            <person name="Wanphrut N."/>
            <person name="Wichels A."/>
            <person name="Zech H."/>
            <person name="Simon M."/>
        </authorList>
    </citation>
    <scope>NUCLEOTIDE SEQUENCE [LARGE SCALE GENOMIC DNA]</scope>
    <source>
        <strain>DSM 16493 / NCIMB 14021 / DFL 12</strain>
    </source>
</reference>
<name>ATPG_DINSH</name>
<gene>
    <name evidence="1" type="primary">atpG</name>
    <name type="ordered locus">Dshi_2935</name>
</gene>
<accession>A8LJR5</accession>